<keyword id="KW-0456">Lyase</keyword>
<keyword id="KW-0663">Pyridoxal phosphate</keyword>
<keyword id="KW-1185">Reference proteome</keyword>
<keyword id="KW-0704">Schiff base</keyword>
<accession>Q18F41</accession>
<gene>
    <name evidence="1" type="primary">pdxS</name>
    <name type="ordered locus">HQ_3323A</name>
</gene>
<comment type="function">
    <text evidence="1">Catalyzes the formation of pyridoxal 5'-phosphate from ribose 5-phosphate (RBP), glyceraldehyde 3-phosphate (G3P) and ammonia. The ammonia is provided by the PdxT subunit. Can also use ribulose 5-phosphate and dihydroxyacetone phosphate as substrates, resulting from enzyme-catalyzed isomerization of RBP and G3P, respectively.</text>
</comment>
<comment type="catalytic activity">
    <reaction evidence="1">
        <text>aldehydo-D-ribose 5-phosphate + D-glyceraldehyde 3-phosphate + L-glutamine = pyridoxal 5'-phosphate + L-glutamate + phosphate + 3 H2O + H(+)</text>
        <dbReference type="Rhea" id="RHEA:31507"/>
        <dbReference type="ChEBI" id="CHEBI:15377"/>
        <dbReference type="ChEBI" id="CHEBI:15378"/>
        <dbReference type="ChEBI" id="CHEBI:29985"/>
        <dbReference type="ChEBI" id="CHEBI:43474"/>
        <dbReference type="ChEBI" id="CHEBI:58273"/>
        <dbReference type="ChEBI" id="CHEBI:58359"/>
        <dbReference type="ChEBI" id="CHEBI:59776"/>
        <dbReference type="ChEBI" id="CHEBI:597326"/>
        <dbReference type="EC" id="4.3.3.6"/>
    </reaction>
</comment>
<comment type="pathway">
    <text evidence="1">Cofactor biosynthesis; pyridoxal 5'-phosphate biosynthesis.</text>
</comment>
<comment type="subunit">
    <text evidence="1">In the presence of PdxT, forms a dodecamer of heterodimers.</text>
</comment>
<comment type="similarity">
    <text evidence="1">Belongs to the PdxS/SNZ family.</text>
</comment>
<reference key="1">
    <citation type="journal article" date="2006" name="BMC Genomics">
        <title>The genome of the square archaeon Haloquadratum walsbyi: life at the limits of water activity.</title>
        <authorList>
            <person name="Bolhuis H."/>
            <person name="Palm P."/>
            <person name="Wende A."/>
            <person name="Falb M."/>
            <person name="Rampp M."/>
            <person name="Rodriguez-Valera F."/>
            <person name="Pfeiffer F."/>
            <person name="Oesterhelt D."/>
        </authorList>
    </citation>
    <scope>NUCLEOTIDE SEQUENCE [LARGE SCALE GENOMIC DNA]</scope>
    <source>
        <strain>DSM 16790 / HBSQ001</strain>
    </source>
</reference>
<sequence length="302" mass="32648">MSEKTDLSELRRGTELVKRGFARMQKGGVIMDVVDAEQARIAEDAGAVAVMALESVPADIRKRGGVARMPDPDIVPEIIDEVSIPAMGKSRIGHTKEAEILESLGVDMIDESEVLTPADDRYHIDKRHFTAPFVCGARNLQEALRRIDEGAAMIRTKGEAGTGDVNQAVHHQRNIKSSIRELVGKSYEERERWARDHEAPAELVHETAEMGRLPVVNFAAGGIATPADAALMMHHGCDGIFVGSGVFGAENPRAMGRAIVEAVNNWDDPDELAQIASNPGKGMKGEANADLSEGEKLQTRGV</sequence>
<evidence type="ECO:0000255" key="1">
    <source>
        <dbReference type="HAMAP-Rule" id="MF_01824"/>
    </source>
</evidence>
<evidence type="ECO:0000256" key="2">
    <source>
        <dbReference type="SAM" id="MobiDB-lite"/>
    </source>
</evidence>
<proteinExistence type="inferred from homology"/>
<name>PDXS_HALWD</name>
<organism>
    <name type="scientific">Haloquadratum walsbyi (strain DSM 16790 / HBSQ001)</name>
    <dbReference type="NCBI Taxonomy" id="362976"/>
    <lineage>
        <taxon>Archaea</taxon>
        <taxon>Methanobacteriati</taxon>
        <taxon>Methanobacteriota</taxon>
        <taxon>Stenosarchaea group</taxon>
        <taxon>Halobacteria</taxon>
        <taxon>Halobacteriales</taxon>
        <taxon>Haloferacaceae</taxon>
        <taxon>Haloquadratum</taxon>
    </lineage>
</organism>
<protein>
    <recommendedName>
        <fullName evidence="1">Pyridoxal 5'-phosphate synthase subunit PdxS</fullName>
        <shortName evidence="1">PLP synthase subunit PdxS</shortName>
        <ecNumber evidence="1">4.3.3.6</ecNumber>
    </recommendedName>
    <alternativeName>
        <fullName evidence="1">Pdx1</fullName>
    </alternativeName>
</protein>
<dbReference type="EC" id="4.3.3.6" evidence="1"/>
<dbReference type="EMBL" id="AM180088">
    <property type="protein sequence ID" value="CAJ53420.1"/>
    <property type="molecule type" value="Genomic_DNA"/>
</dbReference>
<dbReference type="RefSeq" id="WP_011572522.1">
    <property type="nucleotide sequence ID" value="NC_008212.1"/>
</dbReference>
<dbReference type="SMR" id="Q18F41"/>
<dbReference type="STRING" id="362976.HQ_3323A"/>
<dbReference type="GeneID" id="4194555"/>
<dbReference type="KEGG" id="hwa:HQ_3323A"/>
<dbReference type="eggNOG" id="arCOG04075">
    <property type="taxonomic scope" value="Archaea"/>
</dbReference>
<dbReference type="HOGENOM" id="CLU_055352_1_0_2"/>
<dbReference type="UniPathway" id="UPA00245"/>
<dbReference type="Proteomes" id="UP000001975">
    <property type="component" value="Chromosome"/>
</dbReference>
<dbReference type="GO" id="GO:0036381">
    <property type="term" value="F:pyridoxal 5'-phosphate synthase (glutamine hydrolysing) activity"/>
    <property type="evidence" value="ECO:0007669"/>
    <property type="project" value="UniProtKB-UniRule"/>
</dbReference>
<dbReference type="GO" id="GO:0006520">
    <property type="term" value="P:amino acid metabolic process"/>
    <property type="evidence" value="ECO:0007669"/>
    <property type="project" value="TreeGrafter"/>
</dbReference>
<dbReference type="GO" id="GO:0042823">
    <property type="term" value="P:pyridoxal phosphate biosynthetic process"/>
    <property type="evidence" value="ECO:0007669"/>
    <property type="project" value="UniProtKB-UniRule"/>
</dbReference>
<dbReference type="GO" id="GO:0008615">
    <property type="term" value="P:pyridoxine biosynthetic process"/>
    <property type="evidence" value="ECO:0007669"/>
    <property type="project" value="TreeGrafter"/>
</dbReference>
<dbReference type="CDD" id="cd04727">
    <property type="entry name" value="pdxS"/>
    <property type="match status" value="1"/>
</dbReference>
<dbReference type="FunFam" id="3.20.20.70:FF:000001">
    <property type="entry name" value="Pyridoxine biosynthesis protein PDX1"/>
    <property type="match status" value="1"/>
</dbReference>
<dbReference type="Gene3D" id="3.20.20.70">
    <property type="entry name" value="Aldolase class I"/>
    <property type="match status" value="1"/>
</dbReference>
<dbReference type="HAMAP" id="MF_01824">
    <property type="entry name" value="PdxS"/>
    <property type="match status" value="1"/>
</dbReference>
<dbReference type="InterPro" id="IPR013785">
    <property type="entry name" value="Aldolase_TIM"/>
</dbReference>
<dbReference type="InterPro" id="IPR001852">
    <property type="entry name" value="PdxS/SNZ"/>
</dbReference>
<dbReference type="InterPro" id="IPR033755">
    <property type="entry name" value="PdxS/SNZ_N"/>
</dbReference>
<dbReference type="InterPro" id="IPR011060">
    <property type="entry name" value="RibuloseP-bd_barrel"/>
</dbReference>
<dbReference type="NCBIfam" id="NF003215">
    <property type="entry name" value="PRK04180.1"/>
    <property type="match status" value="1"/>
</dbReference>
<dbReference type="PANTHER" id="PTHR31829">
    <property type="entry name" value="PYRIDOXAL 5'-PHOSPHATE SYNTHASE SUBUNIT SNZ1-RELATED"/>
    <property type="match status" value="1"/>
</dbReference>
<dbReference type="PANTHER" id="PTHR31829:SF0">
    <property type="entry name" value="PYRIDOXAL 5'-PHOSPHATE SYNTHASE SUBUNIT SNZ1-RELATED"/>
    <property type="match status" value="1"/>
</dbReference>
<dbReference type="Pfam" id="PF01680">
    <property type="entry name" value="SOR_SNZ"/>
    <property type="match status" value="1"/>
</dbReference>
<dbReference type="PIRSF" id="PIRSF029271">
    <property type="entry name" value="Pdx1"/>
    <property type="match status" value="1"/>
</dbReference>
<dbReference type="SUPFAM" id="SSF51366">
    <property type="entry name" value="Ribulose-phoshate binding barrel"/>
    <property type="match status" value="1"/>
</dbReference>
<dbReference type="PROSITE" id="PS01235">
    <property type="entry name" value="PDXS_SNZ_1"/>
    <property type="match status" value="1"/>
</dbReference>
<dbReference type="PROSITE" id="PS51129">
    <property type="entry name" value="PDXS_SNZ_2"/>
    <property type="match status" value="1"/>
</dbReference>
<feature type="chain" id="PRO_1000070380" description="Pyridoxal 5'-phosphate synthase subunit PdxS">
    <location>
        <begin position="1"/>
        <end position="302"/>
    </location>
</feature>
<feature type="region of interest" description="Disordered" evidence="2">
    <location>
        <begin position="276"/>
        <end position="302"/>
    </location>
</feature>
<feature type="compositionally biased region" description="Basic and acidic residues" evidence="2">
    <location>
        <begin position="293"/>
        <end position="302"/>
    </location>
</feature>
<feature type="active site" description="Schiff-base intermediate with D-ribose 5-phosphate" evidence="1">
    <location>
        <position position="89"/>
    </location>
</feature>
<feature type="binding site" evidence="1">
    <location>
        <position position="32"/>
    </location>
    <ligand>
        <name>D-ribose 5-phosphate</name>
        <dbReference type="ChEBI" id="CHEBI:78346"/>
    </ligand>
</feature>
<feature type="binding site" evidence="1">
    <location>
        <position position="161"/>
    </location>
    <ligand>
        <name>D-ribose 5-phosphate</name>
        <dbReference type="ChEBI" id="CHEBI:78346"/>
    </ligand>
</feature>
<feature type="binding site" evidence="1">
    <location>
        <position position="173"/>
    </location>
    <ligand>
        <name>D-glyceraldehyde 3-phosphate</name>
        <dbReference type="ChEBI" id="CHEBI:59776"/>
    </ligand>
</feature>
<feature type="binding site" evidence="1">
    <location>
        <position position="222"/>
    </location>
    <ligand>
        <name>D-ribose 5-phosphate</name>
        <dbReference type="ChEBI" id="CHEBI:78346"/>
    </ligand>
</feature>
<feature type="binding site" evidence="1">
    <location>
        <begin position="243"/>
        <end position="244"/>
    </location>
    <ligand>
        <name>D-ribose 5-phosphate</name>
        <dbReference type="ChEBI" id="CHEBI:78346"/>
    </ligand>
</feature>